<protein>
    <recommendedName>
        <fullName evidence="1">UPF0756 membrane protein ETA_17460</fullName>
    </recommendedName>
</protein>
<organism>
    <name type="scientific">Erwinia tasmaniensis (strain DSM 17950 / CFBP 7177 / CIP 109463 / NCPPB 4357 / Et1/99)</name>
    <dbReference type="NCBI Taxonomy" id="465817"/>
    <lineage>
        <taxon>Bacteria</taxon>
        <taxon>Pseudomonadati</taxon>
        <taxon>Pseudomonadota</taxon>
        <taxon>Gammaproteobacteria</taxon>
        <taxon>Enterobacterales</taxon>
        <taxon>Erwiniaceae</taxon>
        <taxon>Erwinia</taxon>
    </lineage>
</organism>
<feature type="chain" id="PRO_0000388852" description="UPF0756 membrane protein ETA_17460">
    <location>
        <begin position="1"/>
        <end position="148"/>
    </location>
</feature>
<feature type="transmembrane region" description="Helical" evidence="1">
    <location>
        <begin position="14"/>
        <end position="34"/>
    </location>
</feature>
<feature type="transmembrane region" description="Helical" evidence="1">
    <location>
        <begin position="51"/>
        <end position="71"/>
    </location>
</feature>
<feature type="transmembrane region" description="Helical" evidence="1">
    <location>
        <begin position="80"/>
        <end position="100"/>
    </location>
</feature>
<feature type="transmembrane region" description="Helical" evidence="1">
    <location>
        <begin position="112"/>
        <end position="132"/>
    </location>
</feature>
<gene>
    <name type="ordered locus">ETA_17460</name>
</gene>
<accession>B2VET5</accession>
<sequence length="148" mass="15631">MFDLTLAIMLFLAALSYFSHNITVTIALLVLIVIRMTPLQQTFPWIEKQGMTVGIIILTIGVMAPIASGTIPSSTLMHSFLHWKSLTAIAIGIFVSWLGGRGVTLMSTQPTVVGGLLIGTIIGVSLFRGVPVGPLIAAGLLSLMLGKG</sequence>
<reference key="1">
    <citation type="journal article" date="2008" name="Environ. Microbiol.">
        <title>The genome of Erwinia tasmaniensis strain Et1/99, a non-pathogenic bacterium in the genus Erwinia.</title>
        <authorList>
            <person name="Kube M."/>
            <person name="Migdoll A.M."/>
            <person name="Mueller I."/>
            <person name="Kuhl H."/>
            <person name="Beck A."/>
            <person name="Reinhardt R."/>
            <person name="Geider K."/>
        </authorList>
    </citation>
    <scope>NUCLEOTIDE SEQUENCE [LARGE SCALE GENOMIC DNA]</scope>
    <source>
        <strain>DSM 17950 / CFBP 7177 / CIP 109463 / NCPPB 4357 / Et1/99</strain>
    </source>
</reference>
<dbReference type="EMBL" id="CU468135">
    <property type="protein sequence ID" value="CAO96792.1"/>
    <property type="molecule type" value="Genomic_DNA"/>
</dbReference>
<dbReference type="RefSeq" id="WP_012441481.1">
    <property type="nucleotide sequence ID" value="NC_010694.1"/>
</dbReference>
<dbReference type="STRING" id="465817.ETA_17460"/>
<dbReference type="KEGG" id="eta:ETA_17460"/>
<dbReference type="eggNOG" id="COG2707">
    <property type="taxonomic scope" value="Bacteria"/>
</dbReference>
<dbReference type="HOGENOM" id="CLU_125889_0_0_6"/>
<dbReference type="OrthoDB" id="80306at2"/>
<dbReference type="Proteomes" id="UP000001726">
    <property type="component" value="Chromosome"/>
</dbReference>
<dbReference type="GO" id="GO:0005886">
    <property type="term" value="C:plasma membrane"/>
    <property type="evidence" value="ECO:0007669"/>
    <property type="project" value="UniProtKB-SubCell"/>
</dbReference>
<dbReference type="HAMAP" id="MF_01874">
    <property type="entry name" value="UPF0756"/>
    <property type="match status" value="1"/>
</dbReference>
<dbReference type="InterPro" id="IPR007382">
    <property type="entry name" value="UPF0756_TM"/>
</dbReference>
<dbReference type="PANTHER" id="PTHR38452">
    <property type="entry name" value="UPF0756 MEMBRANE PROTEIN YEAL"/>
    <property type="match status" value="1"/>
</dbReference>
<dbReference type="PANTHER" id="PTHR38452:SF1">
    <property type="entry name" value="UPF0756 MEMBRANE PROTEIN YEAL"/>
    <property type="match status" value="1"/>
</dbReference>
<dbReference type="Pfam" id="PF04284">
    <property type="entry name" value="DUF441"/>
    <property type="match status" value="1"/>
</dbReference>
<name>Y1746_ERWT9</name>
<proteinExistence type="inferred from homology"/>
<comment type="subcellular location">
    <subcellularLocation>
        <location evidence="1">Cell membrane</location>
        <topology evidence="1">Multi-pass membrane protein</topology>
    </subcellularLocation>
</comment>
<comment type="similarity">
    <text evidence="1">Belongs to the UPF0756 family.</text>
</comment>
<keyword id="KW-1003">Cell membrane</keyword>
<keyword id="KW-0472">Membrane</keyword>
<keyword id="KW-1185">Reference proteome</keyword>
<keyword id="KW-0812">Transmembrane</keyword>
<keyword id="KW-1133">Transmembrane helix</keyword>
<evidence type="ECO:0000255" key="1">
    <source>
        <dbReference type="HAMAP-Rule" id="MF_01874"/>
    </source>
</evidence>